<organism>
    <name type="scientific">Legionella pneumophila (strain Paris)</name>
    <dbReference type="NCBI Taxonomy" id="297246"/>
    <lineage>
        <taxon>Bacteria</taxon>
        <taxon>Pseudomonadati</taxon>
        <taxon>Pseudomonadota</taxon>
        <taxon>Gammaproteobacteria</taxon>
        <taxon>Legionellales</taxon>
        <taxon>Legionellaceae</taxon>
        <taxon>Legionella</taxon>
    </lineage>
</organism>
<sequence length="54" mass="6315">MAAVTIKVKMESTAGTGYYKTTTKNPRNHPEKMELMMYDPKVRKHVLFKEKKVK</sequence>
<gene>
    <name evidence="1" type="primary">rpmG</name>
    <name type="ordered locus">lpp0543</name>
</gene>
<comment type="similarity">
    <text evidence="1">Belongs to the bacterial ribosomal protein bL33 family.</text>
</comment>
<reference key="1">
    <citation type="journal article" date="2004" name="Nat. Genet.">
        <title>Evidence in the Legionella pneumophila genome for exploitation of host cell functions and high genome plasticity.</title>
        <authorList>
            <person name="Cazalet C."/>
            <person name="Rusniok C."/>
            <person name="Brueggemann H."/>
            <person name="Zidane N."/>
            <person name="Magnier A."/>
            <person name="Ma L."/>
            <person name="Tichit M."/>
            <person name="Jarraud S."/>
            <person name="Bouchier C."/>
            <person name="Vandenesch F."/>
            <person name="Kunst F."/>
            <person name="Etienne J."/>
            <person name="Glaser P."/>
            <person name="Buchrieser C."/>
        </authorList>
    </citation>
    <scope>NUCLEOTIDE SEQUENCE [LARGE SCALE GENOMIC DNA]</scope>
    <source>
        <strain>Paris</strain>
    </source>
</reference>
<keyword id="KW-0687">Ribonucleoprotein</keyword>
<keyword id="KW-0689">Ribosomal protein</keyword>
<feature type="chain" id="PRO_0000356524" description="Large ribosomal subunit protein bL33">
    <location>
        <begin position="1"/>
        <end position="54"/>
    </location>
</feature>
<name>RL33_LEGPA</name>
<proteinExistence type="inferred from homology"/>
<evidence type="ECO:0000255" key="1">
    <source>
        <dbReference type="HAMAP-Rule" id="MF_00294"/>
    </source>
</evidence>
<evidence type="ECO:0000305" key="2"/>
<protein>
    <recommendedName>
        <fullName evidence="1">Large ribosomal subunit protein bL33</fullName>
    </recommendedName>
    <alternativeName>
        <fullName evidence="2">50S ribosomal protein L33</fullName>
    </alternativeName>
</protein>
<dbReference type="EMBL" id="CR628336">
    <property type="protein sequence ID" value="CAH11691.1"/>
    <property type="molecule type" value="Genomic_DNA"/>
</dbReference>
<dbReference type="RefSeq" id="WP_003635328.1">
    <property type="nucleotide sequence ID" value="NC_006368.1"/>
</dbReference>
<dbReference type="SMR" id="Q5X7R2"/>
<dbReference type="GeneID" id="98066954"/>
<dbReference type="KEGG" id="lpp:lpp0543"/>
<dbReference type="LegioList" id="lpp0543"/>
<dbReference type="HOGENOM" id="CLU_190949_1_1_6"/>
<dbReference type="GO" id="GO:0005737">
    <property type="term" value="C:cytoplasm"/>
    <property type="evidence" value="ECO:0007669"/>
    <property type="project" value="UniProtKB-ARBA"/>
</dbReference>
<dbReference type="GO" id="GO:0015934">
    <property type="term" value="C:large ribosomal subunit"/>
    <property type="evidence" value="ECO:0007669"/>
    <property type="project" value="TreeGrafter"/>
</dbReference>
<dbReference type="GO" id="GO:0003735">
    <property type="term" value="F:structural constituent of ribosome"/>
    <property type="evidence" value="ECO:0007669"/>
    <property type="project" value="InterPro"/>
</dbReference>
<dbReference type="GO" id="GO:0006412">
    <property type="term" value="P:translation"/>
    <property type="evidence" value="ECO:0007669"/>
    <property type="project" value="UniProtKB-UniRule"/>
</dbReference>
<dbReference type="Gene3D" id="2.20.28.120">
    <property type="entry name" value="Ribosomal protein L33"/>
    <property type="match status" value="1"/>
</dbReference>
<dbReference type="HAMAP" id="MF_00294">
    <property type="entry name" value="Ribosomal_bL33"/>
    <property type="match status" value="1"/>
</dbReference>
<dbReference type="InterPro" id="IPR001705">
    <property type="entry name" value="Ribosomal_bL33"/>
</dbReference>
<dbReference type="InterPro" id="IPR038584">
    <property type="entry name" value="Ribosomal_bL33_sf"/>
</dbReference>
<dbReference type="InterPro" id="IPR011332">
    <property type="entry name" value="Ribosomal_zn-bd"/>
</dbReference>
<dbReference type="NCBIfam" id="NF001860">
    <property type="entry name" value="PRK00595.1"/>
    <property type="match status" value="1"/>
</dbReference>
<dbReference type="NCBIfam" id="TIGR01023">
    <property type="entry name" value="rpmG_bact"/>
    <property type="match status" value="1"/>
</dbReference>
<dbReference type="PANTHER" id="PTHR15238">
    <property type="entry name" value="54S RIBOSOMAL PROTEIN L39, MITOCHONDRIAL"/>
    <property type="match status" value="1"/>
</dbReference>
<dbReference type="PANTHER" id="PTHR15238:SF1">
    <property type="entry name" value="LARGE RIBOSOMAL SUBUNIT PROTEIN BL33M"/>
    <property type="match status" value="1"/>
</dbReference>
<dbReference type="Pfam" id="PF00471">
    <property type="entry name" value="Ribosomal_L33"/>
    <property type="match status" value="1"/>
</dbReference>
<dbReference type="SUPFAM" id="SSF57829">
    <property type="entry name" value="Zn-binding ribosomal proteins"/>
    <property type="match status" value="1"/>
</dbReference>
<accession>Q5X7R2</accession>